<name>CBID_SALPB</name>
<reference key="1">
    <citation type="submission" date="2007-11" db="EMBL/GenBank/DDBJ databases">
        <authorList>
            <consortium name="The Salmonella enterica serovar Paratyphi B Genome Sequencing Project"/>
            <person name="McClelland M."/>
            <person name="Sanderson E.K."/>
            <person name="Porwollik S."/>
            <person name="Spieth J."/>
            <person name="Clifton W.S."/>
            <person name="Fulton R."/>
            <person name="Cordes M."/>
            <person name="Wollam A."/>
            <person name="Shah N."/>
            <person name="Pepin K."/>
            <person name="Bhonagiri V."/>
            <person name="Nash W."/>
            <person name="Johnson M."/>
            <person name="Thiruvilangam P."/>
            <person name="Wilson R."/>
        </authorList>
    </citation>
    <scope>NUCLEOTIDE SEQUENCE [LARGE SCALE GENOMIC DNA]</scope>
    <source>
        <strain>ATCC BAA-1250 / SPB7</strain>
    </source>
</reference>
<dbReference type="EC" id="2.1.1.195" evidence="1"/>
<dbReference type="EMBL" id="CP000886">
    <property type="protein sequence ID" value="ABX66494.1"/>
    <property type="molecule type" value="Genomic_DNA"/>
</dbReference>
<dbReference type="RefSeq" id="WP_001292918.1">
    <property type="nucleotide sequence ID" value="NC_010102.1"/>
</dbReference>
<dbReference type="SMR" id="A9MT88"/>
<dbReference type="KEGG" id="spq:SPAB_01073"/>
<dbReference type="PATRIC" id="fig|1016998.12.peg.1014"/>
<dbReference type="HOGENOM" id="CLU_041273_1_0_6"/>
<dbReference type="BioCyc" id="SENT1016998:SPAB_RS04485-MONOMER"/>
<dbReference type="UniPathway" id="UPA00148">
    <property type="reaction ID" value="UER00227"/>
</dbReference>
<dbReference type="Proteomes" id="UP000008556">
    <property type="component" value="Chromosome"/>
</dbReference>
<dbReference type="GO" id="GO:0043780">
    <property type="term" value="F:cobalt-precorrin-5B C1-methyltransferase activity"/>
    <property type="evidence" value="ECO:0007669"/>
    <property type="project" value="RHEA"/>
</dbReference>
<dbReference type="GO" id="GO:0019251">
    <property type="term" value="P:anaerobic cobalamin biosynthetic process"/>
    <property type="evidence" value="ECO:0007669"/>
    <property type="project" value="UniProtKB-UniRule"/>
</dbReference>
<dbReference type="GO" id="GO:0032259">
    <property type="term" value="P:methylation"/>
    <property type="evidence" value="ECO:0007669"/>
    <property type="project" value="UniProtKB-KW"/>
</dbReference>
<dbReference type="Gene3D" id="3.30.2110.10">
    <property type="entry name" value="CbiD-like"/>
    <property type="match status" value="1"/>
</dbReference>
<dbReference type="HAMAP" id="MF_00787">
    <property type="entry name" value="CbiD"/>
    <property type="match status" value="1"/>
</dbReference>
<dbReference type="InterPro" id="IPR002748">
    <property type="entry name" value="CbiD"/>
</dbReference>
<dbReference type="InterPro" id="IPR036074">
    <property type="entry name" value="CbiD_sf"/>
</dbReference>
<dbReference type="NCBIfam" id="TIGR00312">
    <property type="entry name" value="cbiD"/>
    <property type="match status" value="1"/>
</dbReference>
<dbReference type="PANTHER" id="PTHR35863">
    <property type="entry name" value="COBALT-PRECORRIN-5B C(1)-METHYLTRANSFERASE"/>
    <property type="match status" value="1"/>
</dbReference>
<dbReference type="PANTHER" id="PTHR35863:SF1">
    <property type="entry name" value="COBALT-PRECORRIN-5B C(1)-METHYLTRANSFERASE"/>
    <property type="match status" value="1"/>
</dbReference>
<dbReference type="Pfam" id="PF01888">
    <property type="entry name" value="CbiD"/>
    <property type="match status" value="1"/>
</dbReference>
<dbReference type="PIRSF" id="PIRSF026782">
    <property type="entry name" value="CbiD"/>
    <property type="match status" value="1"/>
</dbReference>
<dbReference type="SUPFAM" id="SSF111342">
    <property type="entry name" value="CbiD-like"/>
    <property type="match status" value="1"/>
</dbReference>
<keyword id="KW-0169">Cobalamin biosynthesis</keyword>
<keyword id="KW-0489">Methyltransferase</keyword>
<keyword id="KW-0949">S-adenosyl-L-methionine</keyword>
<keyword id="KW-0808">Transferase</keyword>
<feature type="chain" id="PRO_1000083596" description="Cobalt-precorrin-5B C(1)-methyltransferase">
    <location>
        <begin position="1"/>
        <end position="379"/>
    </location>
</feature>
<evidence type="ECO:0000255" key="1">
    <source>
        <dbReference type="HAMAP-Rule" id="MF_00787"/>
    </source>
</evidence>
<proteinExistence type="inferred from homology"/>
<organism>
    <name type="scientific">Salmonella paratyphi B (strain ATCC BAA-1250 / SPB7)</name>
    <dbReference type="NCBI Taxonomy" id="1016998"/>
    <lineage>
        <taxon>Bacteria</taxon>
        <taxon>Pseudomonadati</taxon>
        <taxon>Pseudomonadota</taxon>
        <taxon>Gammaproteobacteria</taxon>
        <taxon>Enterobacterales</taxon>
        <taxon>Enterobacteriaceae</taxon>
        <taxon>Salmonella</taxon>
    </lineage>
</organism>
<protein>
    <recommendedName>
        <fullName evidence="1">Cobalt-precorrin-5B C(1)-methyltransferase</fullName>
        <ecNumber evidence="1">2.1.1.195</ecNumber>
    </recommendedName>
    <alternativeName>
        <fullName evidence="1">Cobalt-precorrin-6A synthase</fullName>
    </alternativeName>
</protein>
<comment type="function">
    <text evidence="1">Catalyzes the methylation of C-1 in cobalt-precorrin-5B to form cobalt-precorrin-6A.</text>
</comment>
<comment type="catalytic activity">
    <reaction evidence="1">
        <text>Co-precorrin-5B + S-adenosyl-L-methionine = Co-precorrin-6A + S-adenosyl-L-homocysteine</text>
        <dbReference type="Rhea" id="RHEA:26285"/>
        <dbReference type="ChEBI" id="CHEBI:57856"/>
        <dbReference type="ChEBI" id="CHEBI:59789"/>
        <dbReference type="ChEBI" id="CHEBI:60063"/>
        <dbReference type="ChEBI" id="CHEBI:60064"/>
        <dbReference type="EC" id="2.1.1.195"/>
    </reaction>
</comment>
<comment type="pathway">
    <text evidence="1">Cofactor biosynthesis; adenosylcobalamin biosynthesis; cob(II)yrinate a,c-diamide from sirohydrochlorin (anaerobic route): step 6/10.</text>
</comment>
<comment type="similarity">
    <text evidence="1">Belongs to the CbiD family.</text>
</comment>
<sequence length="379" mass="40805">MSELSFDAPVWRHGKALRKGYTTGSCATAAAKVAALMVLRQHLIHQVSIVTPSGVTLCLNVESPHIEGQQAIAAIRKDGGDDVDATHGMLIFARVTLNDSGEITLTGGEGIGTVTRKGVGLPLGSAAINRTPRHTIESAVREAIGPARGADVEIFAPEGEARAQKTYNSRLGILGGISIIGTTGIVTPMSEESWKRSLSLELEIKRASGLTRVILVPGNHGERFVREQMGVDTQAVVTMSNFVGYMIEEAVRLGFCQIVLVGHPGKLIKIAAGIFHTHSHIADARMETLVAHLALLGAPLELLTLVSDCDTTEAAMEHIEAYGFGHIYNHLARRICLRVMQMLRFTKTPPVCDAILFSFDNHILGSNRPVDEIAKELQC</sequence>
<gene>
    <name evidence="1" type="primary">cbiD</name>
    <name type="ordered locus">SPAB_01073</name>
</gene>
<accession>A9MT88</accession>